<comment type="function">
    <text evidence="1">Chaperone protein which promotes assembly of the 20S proteasome as part of a heterodimer with PSMG1. The PSMG1-PSMG2 heterodimer binds to the PSMA5 and PSMA7 proteasome subunits, promotes assembly of the proteasome alpha subunits into the heteroheptameric alpha ring and prevents alpha ring dimerization (By similarity).</text>
</comment>
<comment type="subunit">
    <text evidence="1">Forms a heterodimer with PSMG1. The PSMG1-PSMG2 heterodimer interacts directly with the PSMA5 and PSMA7 proteasome alpha subunits (By similarity).</text>
</comment>
<comment type="subcellular location">
    <subcellularLocation>
        <location evidence="2">Nucleus</location>
    </subcellularLocation>
</comment>
<comment type="PTM">
    <text evidence="1">Degraded by the proteasome upon completion of 20S proteasome maturation.</text>
</comment>
<comment type="similarity">
    <text evidence="3">Belongs to the PSMG2 family.</text>
</comment>
<keyword id="KW-0143">Chaperone</keyword>
<keyword id="KW-0539">Nucleus</keyword>
<keyword id="KW-0597">Phosphoprotein</keyword>
<keyword id="KW-1185">Reference proteome</keyword>
<accession>Q2NL24</accession>
<protein>
    <recommendedName>
        <fullName>Proteasome assembly chaperone 2</fullName>
    </recommendedName>
</protein>
<sequence>MFVPSGDSVPDLAGCTLLMPAVSVGNVGQLAIDLIISTLNMHKIGYFYTDCLVPMVGNNPYATAEENSAELSINAEVYALPSKKLVALQLRSIFIKYKSKSFCEKLLSWVKCSGCAKVVVLSSSHSYHRNDLQLRSTPFRYLLTPSMQKSVQNKIQSLNWEEMEKTPCIPEIDDSEFCVRVPGGGITKLLYDEGCSKEIPIAILLKFVSEGDNIPDALGLVEYLNEWLQIIKPHCEDPTASSLPWKMPSSWRLLFGSGLPPALF</sequence>
<name>PSMG2_BOVIN</name>
<gene>
    <name evidence="4" type="primary">PSMG2</name>
</gene>
<organism>
    <name type="scientific">Bos taurus</name>
    <name type="common">Bovine</name>
    <dbReference type="NCBI Taxonomy" id="9913"/>
    <lineage>
        <taxon>Eukaryota</taxon>
        <taxon>Metazoa</taxon>
        <taxon>Chordata</taxon>
        <taxon>Craniata</taxon>
        <taxon>Vertebrata</taxon>
        <taxon>Euteleostomi</taxon>
        <taxon>Mammalia</taxon>
        <taxon>Eutheria</taxon>
        <taxon>Laurasiatheria</taxon>
        <taxon>Artiodactyla</taxon>
        <taxon>Ruminantia</taxon>
        <taxon>Pecora</taxon>
        <taxon>Bovidae</taxon>
        <taxon>Bovinae</taxon>
        <taxon>Bos</taxon>
    </lineage>
</organism>
<evidence type="ECO:0000250" key="1">
    <source>
        <dbReference type="UniProtKB" id="Q969U7"/>
    </source>
</evidence>
<evidence type="ECO:0000250" key="2">
    <source>
        <dbReference type="UniProtKB" id="Q9EST4"/>
    </source>
</evidence>
<evidence type="ECO:0000255" key="3"/>
<evidence type="ECO:0000312" key="4">
    <source>
        <dbReference type="EMBL" id="AAI11180.1"/>
    </source>
</evidence>
<reference evidence="4" key="1">
    <citation type="submission" date="2005-12" db="EMBL/GenBank/DDBJ databases">
        <authorList>
            <consortium name="NIH - Mammalian Gene Collection (MGC) project"/>
        </authorList>
    </citation>
    <scope>NUCLEOTIDE SEQUENCE [LARGE SCALE MRNA]</scope>
    <source>
        <strain evidence="4">Crossbred X Angus</strain>
        <tissue evidence="4">Liver</tissue>
    </source>
</reference>
<dbReference type="EMBL" id="BC111179">
    <property type="protein sequence ID" value="AAI11180.1"/>
    <property type="molecule type" value="mRNA"/>
</dbReference>
<dbReference type="RefSeq" id="NP_001039830.1">
    <property type="nucleotide sequence ID" value="NM_001046365.2"/>
</dbReference>
<dbReference type="SMR" id="Q2NL24"/>
<dbReference type="FunCoup" id="Q2NL24">
    <property type="interactions" value="4054"/>
</dbReference>
<dbReference type="STRING" id="9913.ENSBTAP00000013953"/>
<dbReference type="PaxDb" id="9913-ENSBTAP00000013953"/>
<dbReference type="Ensembl" id="ENSBTAT00000013953.6">
    <property type="protein sequence ID" value="ENSBTAP00000013953.5"/>
    <property type="gene ID" value="ENSBTAG00000010552.7"/>
</dbReference>
<dbReference type="GeneID" id="533993"/>
<dbReference type="KEGG" id="bta:533993"/>
<dbReference type="CTD" id="56984"/>
<dbReference type="VEuPathDB" id="HostDB:ENSBTAG00000010552"/>
<dbReference type="VGNC" id="VGNC:33479">
    <property type="gene designation" value="PSMG2"/>
</dbReference>
<dbReference type="eggNOG" id="KOG3112">
    <property type="taxonomic scope" value="Eukaryota"/>
</dbReference>
<dbReference type="GeneTree" id="ENSGT00390000018415"/>
<dbReference type="HOGENOM" id="CLU_062640_0_1_1"/>
<dbReference type="InParanoid" id="Q2NL24"/>
<dbReference type="OMA" id="WKEHTGE"/>
<dbReference type="OrthoDB" id="10260712at2759"/>
<dbReference type="TreeFam" id="TF105397"/>
<dbReference type="Reactome" id="R-BTA-9907900">
    <property type="pathway name" value="Proteasome assembly"/>
</dbReference>
<dbReference type="Proteomes" id="UP000009136">
    <property type="component" value="Chromosome 24"/>
</dbReference>
<dbReference type="Bgee" id="ENSBTAG00000010552">
    <property type="expression patterns" value="Expressed in semen and 104 other cell types or tissues"/>
</dbReference>
<dbReference type="GO" id="GO:0005829">
    <property type="term" value="C:cytosol"/>
    <property type="evidence" value="ECO:0000318"/>
    <property type="project" value="GO_Central"/>
</dbReference>
<dbReference type="GO" id="GO:0005634">
    <property type="term" value="C:nucleus"/>
    <property type="evidence" value="ECO:0000250"/>
    <property type="project" value="UniProtKB"/>
</dbReference>
<dbReference type="GO" id="GO:0051131">
    <property type="term" value="P:chaperone-mediated protein complex assembly"/>
    <property type="evidence" value="ECO:0000250"/>
    <property type="project" value="UniProtKB"/>
</dbReference>
<dbReference type="GO" id="GO:0043248">
    <property type="term" value="P:proteasome assembly"/>
    <property type="evidence" value="ECO:0000318"/>
    <property type="project" value="GO_Central"/>
</dbReference>
<dbReference type="FunFam" id="3.40.50.10900:FF:000001">
    <property type="entry name" value="Proteasome assembly chaperone 2"/>
    <property type="match status" value="1"/>
</dbReference>
<dbReference type="FunFam" id="3.40.50.10900:FF:000003">
    <property type="entry name" value="Proteasome assembly chaperone 2"/>
    <property type="match status" value="1"/>
</dbReference>
<dbReference type="Gene3D" id="3.40.50.10900">
    <property type="entry name" value="PAC-like subunit"/>
    <property type="match status" value="2"/>
</dbReference>
<dbReference type="InterPro" id="IPR019151">
    <property type="entry name" value="Proteasome_assmbl_chaperone_2"/>
</dbReference>
<dbReference type="InterPro" id="IPR016562">
    <property type="entry name" value="Proteasome_assmbl_chp_2_euk"/>
</dbReference>
<dbReference type="InterPro" id="IPR038389">
    <property type="entry name" value="PSMG2_sf"/>
</dbReference>
<dbReference type="PANTHER" id="PTHR12970">
    <property type="entry name" value="PROTEASOME ASSEMBLY CHAPERONE 2"/>
    <property type="match status" value="1"/>
</dbReference>
<dbReference type="PANTHER" id="PTHR12970:SF1">
    <property type="entry name" value="PROTEASOME ASSEMBLY CHAPERONE 2"/>
    <property type="match status" value="1"/>
</dbReference>
<dbReference type="Pfam" id="PF09754">
    <property type="entry name" value="PAC2"/>
    <property type="match status" value="1"/>
</dbReference>
<dbReference type="PIRSF" id="PIRSF010044">
    <property type="entry name" value="UCP010044"/>
    <property type="match status" value="1"/>
</dbReference>
<dbReference type="SUPFAM" id="SSF159659">
    <property type="entry name" value="Cgl1923-like"/>
    <property type="match status" value="1"/>
</dbReference>
<proteinExistence type="evidence at transcript level"/>
<feature type="chain" id="PRO_0000322551" description="Proteasome assembly chaperone 2">
    <location>
        <begin position="1"/>
        <end position="264"/>
    </location>
</feature>
<feature type="modified residue" description="Phosphothreonine" evidence="1">
    <location>
        <position position="137"/>
    </location>
</feature>